<protein>
    <recommendedName>
        <fullName evidence="1">Thymidylate kinase</fullName>
        <ecNumber evidence="1">2.7.4.9</ecNumber>
    </recommendedName>
    <alternativeName>
        <fullName evidence="1">dTMP kinase</fullName>
    </alternativeName>
</protein>
<sequence length="192" mass="22301">MYVVFEGIDCVGKSTQISLLKEIYKDAIFTLEPGGTELGKHLREILLNKTHPINKRAELLLFLADRAQHFEEILKINQNKLIISDRSFISGMAYAKDFENDLLFALNSFALENFFPQKIIFLKGDANLIQERLSQKELDSIEKRGIEYFLSVQDKLEKVLHFLKEKISIEILTLDAKESKEKLHQQIKEFLQ</sequence>
<dbReference type="EC" id="2.7.4.9" evidence="1"/>
<dbReference type="EMBL" id="CP000538">
    <property type="protein sequence ID" value="EAQ72331.1"/>
    <property type="molecule type" value="Genomic_DNA"/>
</dbReference>
<dbReference type="RefSeq" id="WP_002856897.1">
    <property type="nucleotide sequence ID" value="NC_008787.1"/>
</dbReference>
<dbReference type="SMR" id="A1VZB4"/>
<dbReference type="KEGG" id="cjj:CJJ81176_0787"/>
<dbReference type="eggNOG" id="COG0125">
    <property type="taxonomic scope" value="Bacteria"/>
</dbReference>
<dbReference type="HOGENOM" id="CLU_049131_0_0_7"/>
<dbReference type="Proteomes" id="UP000000646">
    <property type="component" value="Chromosome"/>
</dbReference>
<dbReference type="GO" id="GO:0005829">
    <property type="term" value="C:cytosol"/>
    <property type="evidence" value="ECO:0007669"/>
    <property type="project" value="TreeGrafter"/>
</dbReference>
<dbReference type="GO" id="GO:0005524">
    <property type="term" value="F:ATP binding"/>
    <property type="evidence" value="ECO:0007669"/>
    <property type="project" value="UniProtKB-UniRule"/>
</dbReference>
<dbReference type="GO" id="GO:0004798">
    <property type="term" value="F:dTMP kinase activity"/>
    <property type="evidence" value="ECO:0007669"/>
    <property type="project" value="UniProtKB-UniRule"/>
</dbReference>
<dbReference type="GO" id="GO:0006233">
    <property type="term" value="P:dTDP biosynthetic process"/>
    <property type="evidence" value="ECO:0007669"/>
    <property type="project" value="InterPro"/>
</dbReference>
<dbReference type="GO" id="GO:0006235">
    <property type="term" value="P:dTTP biosynthetic process"/>
    <property type="evidence" value="ECO:0007669"/>
    <property type="project" value="UniProtKB-UniRule"/>
</dbReference>
<dbReference type="GO" id="GO:0006227">
    <property type="term" value="P:dUDP biosynthetic process"/>
    <property type="evidence" value="ECO:0007669"/>
    <property type="project" value="TreeGrafter"/>
</dbReference>
<dbReference type="CDD" id="cd01672">
    <property type="entry name" value="TMPK"/>
    <property type="match status" value="1"/>
</dbReference>
<dbReference type="Gene3D" id="3.40.50.300">
    <property type="entry name" value="P-loop containing nucleotide triphosphate hydrolases"/>
    <property type="match status" value="1"/>
</dbReference>
<dbReference type="HAMAP" id="MF_00165">
    <property type="entry name" value="Thymidylate_kinase"/>
    <property type="match status" value="1"/>
</dbReference>
<dbReference type="InterPro" id="IPR027417">
    <property type="entry name" value="P-loop_NTPase"/>
</dbReference>
<dbReference type="InterPro" id="IPR039430">
    <property type="entry name" value="Thymidylate_kin-like_dom"/>
</dbReference>
<dbReference type="InterPro" id="IPR018094">
    <property type="entry name" value="Thymidylate_kinase"/>
</dbReference>
<dbReference type="NCBIfam" id="TIGR00041">
    <property type="entry name" value="DTMP_kinase"/>
    <property type="match status" value="1"/>
</dbReference>
<dbReference type="PANTHER" id="PTHR10344">
    <property type="entry name" value="THYMIDYLATE KINASE"/>
    <property type="match status" value="1"/>
</dbReference>
<dbReference type="PANTHER" id="PTHR10344:SF4">
    <property type="entry name" value="UMP-CMP KINASE 2, MITOCHONDRIAL"/>
    <property type="match status" value="1"/>
</dbReference>
<dbReference type="Pfam" id="PF02223">
    <property type="entry name" value="Thymidylate_kin"/>
    <property type="match status" value="1"/>
</dbReference>
<dbReference type="SUPFAM" id="SSF52540">
    <property type="entry name" value="P-loop containing nucleoside triphosphate hydrolases"/>
    <property type="match status" value="1"/>
</dbReference>
<dbReference type="PROSITE" id="PS01331">
    <property type="entry name" value="THYMIDYLATE_KINASE"/>
    <property type="match status" value="1"/>
</dbReference>
<accession>A1VZB4</accession>
<feature type="chain" id="PRO_1000023171" description="Thymidylate kinase">
    <location>
        <begin position="1"/>
        <end position="192"/>
    </location>
</feature>
<feature type="binding site" evidence="1">
    <location>
        <begin position="7"/>
        <end position="14"/>
    </location>
    <ligand>
        <name>ATP</name>
        <dbReference type="ChEBI" id="CHEBI:30616"/>
    </ligand>
</feature>
<gene>
    <name evidence="1" type="primary">tmk</name>
    <name type="ordered locus">CJJ81176_0787</name>
</gene>
<name>KTHY_CAMJJ</name>
<reference key="1">
    <citation type="submission" date="2006-12" db="EMBL/GenBank/DDBJ databases">
        <authorList>
            <person name="Fouts D.E."/>
            <person name="Nelson K.E."/>
            <person name="Sebastian Y."/>
        </authorList>
    </citation>
    <scope>NUCLEOTIDE SEQUENCE [LARGE SCALE GENOMIC DNA]</scope>
    <source>
        <strain>81-176</strain>
    </source>
</reference>
<organism>
    <name type="scientific">Campylobacter jejuni subsp. jejuni serotype O:23/36 (strain 81-176)</name>
    <dbReference type="NCBI Taxonomy" id="354242"/>
    <lineage>
        <taxon>Bacteria</taxon>
        <taxon>Pseudomonadati</taxon>
        <taxon>Campylobacterota</taxon>
        <taxon>Epsilonproteobacteria</taxon>
        <taxon>Campylobacterales</taxon>
        <taxon>Campylobacteraceae</taxon>
        <taxon>Campylobacter</taxon>
    </lineage>
</organism>
<proteinExistence type="inferred from homology"/>
<comment type="function">
    <text evidence="1">Phosphorylation of dTMP to form dTDP in both de novo and salvage pathways of dTTP synthesis.</text>
</comment>
<comment type="catalytic activity">
    <reaction evidence="1">
        <text>dTMP + ATP = dTDP + ADP</text>
        <dbReference type="Rhea" id="RHEA:13517"/>
        <dbReference type="ChEBI" id="CHEBI:30616"/>
        <dbReference type="ChEBI" id="CHEBI:58369"/>
        <dbReference type="ChEBI" id="CHEBI:63528"/>
        <dbReference type="ChEBI" id="CHEBI:456216"/>
        <dbReference type="EC" id="2.7.4.9"/>
    </reaction>
</comment>
<comment type="similarity">
    <text evidence="1">Belongs to the thymidylate kinase family.</text>
</comment>
<keyword id="KW-0067">ATP-binding</keyword>
<keyword id="KW-0418">Kinase</keyword>
<keyword id="KW-0545">Nucleotide biosynthesis</keyword>
<keyword id="KW-0547">Nucleotide-binding</keyword>
<keyword id="KW-0808">Transferase</keyword>
<evidence type="ECO:0000255" key="1">
    <source>
        <dbReference type="HAMAP-Rule" id="MF_00165"/>
    </source>
</evidence>